<proteinExistence type="inferred from homology"/>
<accession>B1MTB7</accession>
<keyword id="KW-0325">Glycoprotein</keyword>
<keyword id="KW-0964">Secreted</keyword>
<sequence length="375" mass="42008">MDALQLANSAFAVDMFKQLCEKEPVGNVLFSPICLSTSLSLAQVGAKGDTANEIGQVLHFENVKDVPFGFQTVTSDVNKLSSFYSLKLIKRLYVDKSLNLSTEFISSTKRPYAKELETVDFKDKLEETKGQINNSIKDLTDGHFENILADNSVSNQTKILVVNAAYFVGKWMKKFPESETKECPFRVNKTDTKPVQMMNIEATFCMGNIDSIDCKIIELPFQNKHLSMFILLPKDVEDESTGLEKIEKQLNSEALAQWTNPSTMANAKVKLSIPKFKVEKIIDPKASLENLGLKRIFSEDTSDFSGMSETKGVALSNVIHKVCLEITEDGGDSIEVPGARILQHKDELNADHPFVYIIRHNKTRNIIFFGKFCSP</sequence>
<reference key="1">
    <citation type="submission" date="2008-03" db="EMBL/GenBank/DDBJ databases">
        <title>NISC comparative sequencing initiative.</title>
        <authorList>
            <person name="Antonellis A."/>
            <person name="Benjamin B."/>
            <person name="Blakesley R.W."/>
            <person name="Bouffard G.G."/>
            <person name="Brinkley C."/>
            <person name="Brooks S."/>
            <person name="Chu G."/>
            <person name="Chub I."/>
            <person name="Coleman H."/>
            <person name="Fuksenko T."/>
            <person name="Gestole M."/>
            <person name="Gregory M."/>
            <person name="Guan X."/>
            <person name="Gupta J."/>
            <person name="Gurson N."/>
            <person name="Han E."/>
            <person name="Han J."/>
            <person name="Hansen N."/>
            <person name="Hargrove A."/>
            <person name="Hines-Harris K."/>
            <person name="Ho S.-L."/>
            <person name="Hu P."/>
            <person name="Hunter G."/>
            <person name="Hurle B."/>
            <person name="Idol J.R."/>
            <person name="Johnson T."/>
            <person name="Knight E."/>
            <person name="Kwong P."/>
            <person name="Lee-Lin S.-Q."/>
            <person name="Legaspi R."/>
            <person name="Madden M."/>
            <person name="Maduro Q.L."/>
            <person name="Maduro V.B."/>
            <person name="Margulies E.H."/>
            <person name="Masiello C."/>
            <person name="Maskeri B."/>
            <person name="McDowell J."/>
            <person name="Merkulov G."/>
            <person name="Montemayor C."/>
            <person name="Mullikin J.C."/>
            <person name="Park M."/>
            <person name="Prasad A."/>
            <person name="Ramsahoye C."/>
            <person name="Reddix-Dugue N."/>
            <person name="Riebow N."/>
            <person name="Schandler K."/>
            <person name="Schueler M.G."/>
            <person name="Sison C."/>
            <person name="Smith L."/>
            <person name="Stantripop S."/>
            <person name="Thomas J.W."/>
            <person name="Thomas P.J."/>
            <person name="Tsipouri V."/>
            <person name="Young A."/>
            <person name="Green E.D."/>
        </authorList>
    </citation>
    <scope>NUCLEOTIDE SEQUENCE [LARGE SCALE GENOMIC DNA]</scope>
</reference>
<organism>
    <name type="scientific">Plecturocebus moloch</name>
    <name type="common">Dusky titi monkey</name>
    <name type="synonym">Callicebus moloch</name>
    <dbReference type="NCBI Taxonomy" id="9523"/>
    <lineage>
        <taxon>Eukaryota</taxon>
        <taxon>Metazoa</taxon>
        <taxon>Chordata</taxon>
        <taxon>Craniata</taxon>
        <taxon>Vertebrata</taxon>
        <taxon>Euteleostomi</taxon>
        <taxon>Mammalia</taxon>
        <taxon>Eutheria</taxon>
        <taxon>Euarchontoglires</taxon>
        <taxon>Primates</taxon>
        <taxon>Haplorrhini</taxon>
        <taxon>Platyrrhini</taxon>
        <taxon>Pitheciidae</taxon>
        <taxon>Callicebinae</taxon>
        <taxon>Plecturocebus</taxon>
    </lineage>
</organism>
<gene>
    <name type="primary">SERPINB5</name>
    <name type="synonym">PI5</name>
</gene>
<comment type="function">
    <text evidence="1">Tumor suppressor. It blocks the growth, invasion, and metastatic properties of mammary tumors. As it does not undergo the S (stressed) to R (relaxed) conformational transition characteristic of active serpins, it exhibits no serine protease inhibitory activity (By similarity).</text>
</comment>
<comment type="subunit">
    <text evidence="1">Interacts with IRF6.</text>
</comment>
<comment type="subcellular location">
    <subcellularLocation>
        <location evidence="1">Secreted</location>
        <location evidence="1">Extracellular space</location>
    </subcellularLocation>
</comment>
<comment type="similarity">
    <text evidence="3">Belongs to the serpin family. Ov-serpin subfamily.</text>
</comment>
<name>SPB5_PLEMO</name>
<evidence type="ECO:0000250" key="1"/>
<evidence type="ECO:0000255" key="2"/>
<evidence type="ECO:0000305" key="3"/>
<protein>
    <recommendedName>
        <fullName>Serpin B5</fullName>
    </recommendedName>
    <alternativeName>
        <fullName>Maspin</fullName>
    </alternativeName>
    <alternativeName>
        <fullName>Peptidase inhibitor 5</fullName>
        <shortName>PI-5</shortName>
    </alternativeName>
</protein>
<dbReference type="EMBL" id="DP000624">
    <property type="protein sequence ID" value="ACA57862.1"/>
    <property type="molecule type" value="Genomic_DNA"/>
</dbReference>
<dbReference type="SMR" id="B1MTB7"/>
<dbReference type="MEROPS" id="I04.980"/>
<dbReference type="GlyCosmos" id="B1MTB7">
    <property type="glycosylation" value="5 sites, No reported glycans"/>
</dbReference>
<dbReference type="GO" id="GO:0005615">
    <property type="term" value="C:extracellular space"/>
    <property type="evidence" value="ECO:0007669"/>
    <property type="project" value="InterPro"/>
</dbReference>
<dbReference type="GO" id="GO:0004867">
    <property type="term" value="F:serine-type endopeptidase inhibitor activity"/>
    <property type="evidence" value="ECO:0007669"/>
    <property type="project" value="InterPro"/>
</dbReference>
<dbReference type="CDD" id="cd02057">
    <property type="entry name" value="serpinB5_maspin"/>
    <property type="match status" value="1"/>
</dbReference>
<dbReference type="FunFam" id="3.30.497.10:FF:000009">
    <property type="entry name" value="serpin B5 isoform X2"/>
    <property type="match status" value="1"/>
</dbReference>
<dbReference type="FunFam" id="2.30.39.10:FF:000014">
    <property type="entry name" value="Serpin family B member 9"/>
    <property type="match status" value="1"/>
</dbReference>
<dbReference type="Gene3D" id="2.30.39.10">
    <property type="entry name" value="Alpha-1-antitrypsin, domain 1"/>
    <property type="match status" value="1"/>
</dbReference>
<dbReference type="Gene3D" id="3.30.497.10">
    <property type="entry name" value="Antithrombin, subunit I, domain 2"/>
    <property type="match status" value="1"/>
</dbReference>
<dbReference type="InterPro" id="IPR000240">
    <property type="entry name" value="Serpin_B9/Maspin"/>
</dbReference>
<dbReference type="InterPro" id="IPR023795">
    <property type="entry name" value="Serpin_CS"/>
</dbReference>
<dbReference type="InterPro" id="IPR023796">
    <property type="entry name" value="Serpin_dom"/>
</dbReference>
<dbReference type="InterPro" id="IPR000215">
    <property type="entry name" value="Serpin_fam"/>
</dbReference>
<dbReference type="InterPro" id="IPR036186">
    <property type="entry name" value="Serpin_sf"/>
</dbReference>
<dbReference type="InterPro" id="IPR042178">
    <property type="entry name" value="Serpin_sf_1"/>
</dbReference>
<dbReference type="InterPro" id="IPR042185">
    <property type="entry name" value="Serpin_sf_2"/>
</dbReference>
<dbReference type="InterPro" id="IPR033836">
    <property type="entry name" value="SERPINB5_serpin_dom"/>
</dbReference>
<dbReference type="PANTHER" id="PTHR11461">
    <property type="entry name" value="SERINE PROTEASE INHIBITOR, SERPIN"/>
    <property type="match status" value="1"/>
</dbReference>
<dbReference type="PANTHER" id="PTHR11461:SF55">
    <property type="entry name" value="SERPIN B5"/>
    <property type="match status" value="1"/>
</dbReference>
<dbReference type="Pfam" id="PF00079">
    <property type="entry name" value="Serpin"/>
    <property type="match status" value="1"/>
</dbReference>
<dbReference type="PRINTS" id="PR00676">
    <property type="entry name" value="MASPIN"/>
</dbReference>
<dbReference type="SMART" id="SM00093">
    <property type="entry name" value="SERPIN"/>
    <property type="match status" value="1"/>
</dbReference>
<dbReference type="SUPFAM" id="SSF56574">
    <property type="entry name" value="Serpins"/>
    <property type="match status" value="1"/>
</dbReference>
<dbReference type="PROSITE" id="PS00284">
    <property type="entry name" value="SERPIN"/>
    <property type="match status" value="1"/>
</dbReference>
<feature type="chain" id="PRO_0000372428" description="Serpin B5">
    <location>
        <begin position="1"/>
        <end position="375"/>
    </location>
</feature>
<feature type="site" description="Reactive bond homolog" evidence="1">
    <location>
        <begin position="340"/>
        <end position="341"/>
    </location>
</feature>
<feature type="glycosylation site" description="N-linked (GlcNAc...) asparagine" evidence="2">
    <location>
        <position position="99"/>
    </location>
</feature>
<feature type="glycosylation site" description="N-linked (GlcNAc...) asparagine" evidence="2">
    <location>
        <position position="133"/>
    </location>
</feature>
<feature type="glycosylation site" description="N-linked (GlcNAc...) asparagine" evidence="2">
    <location>
        <position position="155"/>
    </location>
</feature>
<feature type="glycosylation site" description="N-linked (GlcNAc...) asparagine" evidence="2">
    <location>
        <position position="188"/>
    </location>
</feature>
<feature type="glycosylation site" description="N-linked (GlcNAc...) asparagine" evidence="2">
    <location>
        <position position="361"/>
    </location>
</feature>